<feature type="chain" id="PRO_1000166468" description="Small ribosomal subunit protein uS17">
    <location>
        <begin position="1"/>
        <end position="79"/>
    </location>
</feature>
<accession>B8H4E3</accession>
<dbReference type="EMBL" id="CP001340">
    <property type="protein sequence ID" value="ACL94780.1"/>
    <property type="molecule type" value="Genomic_DNA"/>
</dbReference>
<dbReference type="RefSeq" id="WP_010919136.1">
    <property type="nucleotide sequence ID" value="NC_011916.1"/>
</dbReference>
<dbReference type="RefSeq" id="YP_002516688.1">
    <property type="nucleotide sequence ID" value="NC_011916.1"/>
</dbReference>
<dbReference type="SMR" id="B8H4E3"/>
<dbReference type="GeneID" id="7333047"/>
<dbReference type="KEGG" id="ccs:CCNA_01315"/>
<dbReference type="PATRIC" id="fig|565050.3.peg.1299"/>
<dbReference type="HOGENOM" id="CLU_073626_1_1_5"/>
<dbReference type="OrthoDB" id="9811714at2"/>
<dbReference type="PhylomeDB" id="B8H4E3"/>
<dbReference type="Proteomes" id="UP000001364">
    <property type="component" value="Chromosome"/>
</dbReference>
<dbReference type="GO" id="GO:0022627">
    <property type="term" value="C:cytosolic small ribosomal subunit"/>
    <property type="evidence" value="ECO:0007669"/>
    <property type="project" value="TreeGrafter"/>
</dbReference>
<dbReference type="GO" id="GO:0019843">
    <property type="term" value="F:rRNA binding"/>
    <property type="evidence" value="ECO:0007669"/>
    <property type="project" value="UniProtKB-UniRule"/>
</dbReference>
<dbReference type="GO" id="GO:0003735">
    <property type="term" value="F:structural constituent of ribosome"/>
    <property type="evidence" value="ECO:0007669"/>
    <property type="project" value="InterPro"/>
</dbReference>
<dbReference type="GO" id="GO:0006412">
    <property type="term" value="P:translation"/>
    <property type="evidence" value="ECO:0007669"/>
    <property type="project" value="UniProtKB-UniRule"/>
</dbReference>
<dbReference type="CDD" id="cd00364">
    <property type="entry name" value="Ribosomal_uS17"/>
    <property type="match status" value="1"/>
</dbReference>
<dbReference type="Gene3D" id="2.40.50.140">
    <property type="entry name" value="Nucleic acid-binding proteins"/>
    <property type="match status" value="1"/>
</dbReference>
<dbReference type="HAMAP" id="MF_01345_B">
    <property type="entry name" value="Ribosomal_uS17_B"/>
    <property type="match status" value="1"/>
</dbReference>
<dbReference type="InterPro" id="IPR012340">
    <property type="entry name" value="NA-bd_OB-fold"/>
</dbReference>
<dbReference type="InterPro" id="IPR000266">
    <property type="entry name" value="Ribosomal_uS17"/>
</dbReference>
<dbReference type="InterPro" id="IPR019984">
    <property type="entry name" value="Ribosomal_uS17_bact/chlr"/>
</dbReference>
<dbReference type="NCBIfam" id="NF004123">
    <property type="entry name" value="PRK05610.1"/>
    <property type="match status" value="1"/>
</dbReference>
<dbReference type="NCBIfam" id="TIGR03635">
    <property type="entry name" value="uS17_bact"/>
    <property type="match status" value="1"/>
</dbReference>
<dbReference type="PANTHER" id="PTHR10744">
    <property type="entry name" value="40S RIBOSOMAL PROTEIN S11 FAMILY MEMBER"/>
    <property type="match status" value="1"/>
</dbReference>
<dbReference type="PANTHER" id="PTHR10744:SF1">
    <property type="entry name" value="SMALL RIBOSOMAL SUBUNIT PROTEIN US17M"/>
    <property type="match status" value="1"/>
</dbReference>
<dbReference type="Pfam" id="PF00366">
    <property type="entry name" value="Ribosomal_S17"/>
    <property type="match status" value="1"/>
</dbReference>
<dbReference type="PRINTS" id="PR00973">
    <property type="entry name" value="RIBOSOMALS17"/>
</dbReference>
<dbReference type="SUPFAM" id="SSF50249">
    <property type="entry name" value="Nucleic acid-binding proteins"/>
    <property type="match status" value="1"/>
</dbReference>
<name>RS17_CAUVN</name>
<keyword id="KW-1185">Reference proteome</keyword>
<keyword id="KW-0687">Ribonucleoprotein</keyword>
<keyword id="KW-0689">Ribosomal protein</keyword>
<keyword id="KW-0694">RNA-binding</keyword>
<keyword id="KW-0699">rRNA-binding</keyword>
<reference key="1">
    <citation type="journal article" date="2010" name="J. Bacteriol.">
        <title>The genetic basis of laboratory adaptation in Caulobacter crescentus.</title>
        <authorList>
            <person name="Marks M.E."/>
            <person name="Castro-Rojas C.M."/>
            <person name="Teiling C."/>
            <person name="Du L."/>
            <person name="Kapatral V."/>
            <person name="Walunas T.L."/>
            <person name="Crosson S."/>
        </authorList>
    </citation>
    <scope>NUCLEOTIDE SEQUENCE [LARGE SCALE GENOMIC DNA]</scope>
    <source>
        <strain>NA1000 / CB15N</strain>
    </source>
</reference>
<proteinExistence type="inferred from homology"/>
<gene>
    <name evidence="1" type="primary">rpsQ</name>
    <name type="ordered locus">CCNA_01315</name>
</gene>
<organism>
    <name type="scientific">Caulobacter vibrioides (strain NA1000 / CB15N)</name>
    <name type="common">Caulobacter crescentus</name>
    <dbReference type="NCBI Taxonomy" id="565050"/>
    <lineage>
        <taxon>Bacteria</taxon>
        <taxon>Pseudomonadati</taxon>
        <taxon>Pseudomonadota</taxon>
        <taxon>Alphaproteobacteria</taxon>
        <taxon>Caulobacterales</taxon>
        <taxon>Caulobacteraceae</taxon>
        <taxon>Caulobacter</taxon>
    </lineage>
</organism>
<sequence>MPKRILEGVVVSDKGDKTVVVKVERTIVHPVLKKIVRQSKKYHAHDEANAYKAGEAIRIIECAPKSKLKTWEVLPKASA</sequence>
<comment type="function">
    <text evidence="1">One of the primary rRNA binding proteins, it binds specifically to the 5'-end of 16S ribosomal RNA.</text>
</comment>
<comment type="subunit">
    <text evidence="1">Part of the 30S ribosomal subunit.</text>
</comment>
<comment type="similarity">
    <text evidence="1">Belongs to the universal ribosomal protein uS17 family.</text>
</comment>
<evidence type="ECO:0000255" key="1">
    <source>
        <dbReference type="HAMAP-Rule" id="MF_01345"/>
    </source>
</evidence>
<evidence type="ECO:0000305" key="2"/>
<protein>
    <recommendedName>
        <fullName evidence="1">Small ribosomal subunit protein uS17</fullName>
    </recommendedName>
    <alternativeName>
        <fullName evidence="2">30S ribosomal protein S17</fullName>
    </alternativeName>
</protein>